<dbReference type="EC" id="3.1.-.-" evidence="1"/>
<dbReference type="EMBL" id="CP001147">
    <property type="protein sequence ID" value="ACI21703.1"/>
    <property type="molecule type" value="Genomic_DNA"/>
</dbReference>
<dbReference type="RefSeq" id="WP_012546411.1">
    <property type="nucleotide sequence ID" value="NC_011296.1"/>
</dbReference>
<dbReference type="RefSeq" id="YP_002249821.1">
    <property type="nucleotide sequence ID" value="NC_011296.1"/>
</dbReference>
<dbReference type="SMR" id="B5YIU7"/>
<dbReference type="STRING" id="289376.THEYE_A2034"/>
<dbReference type="EnsemblBacteria" id="ACI21703">
    <property type="protein sequence ID" value="ACI21703"/>
    <property type="gene ID" value="THEYE_A2034"/>
</dbReference>
<dbReference type="KEGG" id="tye:THEYE_A2034"/>
<dbReference type="PATRIC" id="fig|289376.4.peg.1982"/>
<dbReference type="eggNOG" id="COG1343">
    <property type="taxonomic scope" value="Bacteria"/>
</dbReference>
<dbReference type="HOGENOM" id="CLU_161124_0_1_0"/>
<dbReference type="InParanoid" id="B5YIU7"/>
<dbReference type="OrthoDB" id="279819at2"/>
<dbReference type="Proteomes" id="UP000000718">
    <property type="component" value="Chromosome"/>
</dbReference>
<dbReference type="GO" id="GO:0046872">
    <property type="term" value="F:metal ion binding"/>
    <property type="evidence" value="ECO:0007669"/>
    <property type="project" value="UniProtKB-UniRule"/>
</dbReference>
<dbReference type="GO" id="GO:0004521">
    <property type="term" value="F:RNA endonuclease activity"/>
    <property type="evidence" value="ECO:0007669"/>
    <property type="project" value="InterPro"/>
</dbReference>
<dbReference type="GO" id="GO:0051607">
    <property type="term" value="P:defense response to virus"/>
    <property type="evidence" value="ECO:0007669"/>
    <property type="project" value="UniProtKB-UniRule"/>
</dbReference>
<dbReference type="GO" id="GO:0043571">
    <property type="term" value="P:maintenance of CRISPR repeat elements"/>
    <property type="evidence" value="ECO:0007669"/>
    <property type="project" value="UniProtKB-UniRule"/>
</dbReference>
<dbReference type="CDD" id="cd09725">
    <property type="entry name" value="Cas2_I_II_III"/>
    <property type="match status" value="1"/>
</dbReference>
<dbReference type="Gene3D" id="3.30.70.240">
    <property type="match status" value="1"/>
</dbReference>
<dbReference type="HAMAP" id="MF_01471">
    <property type="entry name" value="Cas2"/>
    <property type="match status" value="1"/>
</dbReference>
<dbReference type="InterPro" id="IPR021127">
    <property type="entry name" value="CRISPR_associated_Cas2"/>
</dbReference>
<dbReference type="InterPro" id="IPR019199">
    <property type="entry name" value="Virulence_VapD/CRISPR_Cas2"/>
</dbReference>
<dbReference type="NCBIfam" id="TIGR01573">
    <property type="entry name" value="cas2"/>
    <property type="match status" value="1"/>
</dbReference>
<dbReference type="PANTHER" id="PTHR34405">
    <property type="entry name" value="CRISPR-ASSOCIATED ENDORIBONUCLEASE CAS2"/>
    <property type="match status" value="1"/>
</dbReference>
<dbReference type="PANTHER" id="PTHR34405:SF1">
    <property type="entry name" value="CRISPR-ASSOCIATED ENDORIBONUCLEASE CAS2"/>
    <property type="match status" value="1"/>
</dbReference>
<dbReference type="Pfam" id="PF09827">
    <property type="entry name" value="CRISPR_Cas2"/>
    <property type="match status" value="1"/>
</dbReference>
<dbReference type="SUPFAM" id="SSF143430">
    <property type="entry name" value="TTP0101/SSO1404-like"/>
    <property type="match status" value="1"/>
</dbReference>
<keyword id="KW-0051">Antiviral defense</keyword>
<keyword id="KW-0255">Endonuclease</keyword>
<keyword id="KW-0378">Hydrolase</keyword>
<keyword id="KW-0460">Magnesium</keyword>
<keyword id="KW-0479">Metal-binding</keyword>
<keyword id="KW-0540">Nuclease</keyword>
<keyword id="KW-1185">Reference proteome</keyword>
<accession>B5YIU7</accession>
<comment type="function">
    <text evidence="1">CRISPR (clustered regularly interspaced short palindromic repeat), is an adaptive immune system that provides protection against mobile genetic elements (viruses, transposable elements and conjugative plasmids). CRISPR clusters contain sequences complementary to antecedent mobile elements and target invading nucleic acids. CRISPR clusters are transcribed and processed into CRISPR RNA (crRNA). Functions as a ssRNA-specific endoribonuclease. Involved in the integration of spacer DNA into the CRISPR cassette.</text>
</comment>
<comment type="cofactor">
    <cofactor evidence="1">
        <name>Mg(2+)</name>
        <dbReference type="ChEBI" id="CHEBI:18420"/>
    </cofactor>
</comment>
<comment type="subunit">
    <text evidence="1">Homodimer, forms a heterotetramer with a Cas1 homodimer.</text>
</comment>
<comment type="similarity">
    <text evidence="1">Belongs to the CRISPR-associated endoribonuclease Cas2 protein family.</text>
</comment>
<sequence>MPYLIVTYDIAEERVNKVRKILKKYFMWVQNSVFEGEITEGKLLKCKLELEKVIDKEVDSVYFYSLENRLNYRKTVLGIEKEITGNIL</sequence>
<organism>
    <name type="scientific">Thermodesulfovibrio yellowstonii (strain ATCC 51303 / DSM 11347 / YP87)</name>
    <dbReference type="NCBI Taxonomy" id="289376"/>
    <lineage>
        <taxon>Bacteria</taxon>
        <taxon>Pseudomonadati</taxon>
        <taxon>Nitrospirota</taxon>
        <taxon>Thermodesulfovibrionia</taxon>
        <taxon>Thermodesulfovibrionales</taxon>
        <taxon>Thermodesulfovibrionaceae</taxon>
        <taxon>Thermodesulfovibrio</taxon>
    </lineage>
</organism>
<feature type="chain" id="PRO_0000417735" description="CRISPR-associated endoribonuclease Cas2 3">
    <location>
        <begin position="1"/>
        <end position="88"/>
    </location>
</feature>
<feature type="binding site" evidence="1">
    <location>
        <position position="9"/>
    </location>
    <ligand>
        <name>Mg(2+)</name>
        <dbReference type="ChEBI" id="CHEBI:18420"/>
        <note>catalytic</note>
    </ligand>
</feature>
<protein>
    <recommendedName>
        <fullName evidence="1">CRISPR-associated endoribonuclease Cas2 3</fullName>
        <ecNumber evidence="1">3.1.-.-</ecNumber>
    </recommendedName>
</protein>
<reference key="1">
    <citation type="submission" date="2008-08" db="EMBL/GenBank/DDBJ databases">
        <title>The complete genome sequence of Thermodesulfovibrio yellowstonii strain ATCC 51303 / DSM 11347 / YP87.</title>
        <authorList>
            <person name="Dodson R.J."/>
            <person name="Durkin A.S."/>
            <person name="Wu M."/>
            <person name="Eisen J."/>
            <person name="Sutton G."/>
        </authorList>
    </citation>
    <scope>NUCLEOTIDE SEQUENCE [LARGE SCALE GENOMIC DNA]</scope>
    <source>
        <strain>ATCC 51303 / DSM 11347 / YP87</strain>
    </source>
</reference>
<name>CAS2C_THEYD</name>
<proteinExistence type="inferred from homology"/>
<evidence type="ECO:0000255" key="1">
    <source>
        <dbReference type="HAMAP-Rule" id="MF_01471"/>
    </source>
</evidence>
<gene>
    <name evidence="1" type="primary">cas2-3</name>
    <name type="ordered locus">THEYE_A2034</name>
</gene>